<feature type="chain" id="PRO_0000106678" description="Putative antitoxin RelB1">
    <location>
        <begin position="1"/>
        <end position="82"/>
    </location>
</feature>
<evidence type="ECO:0000305" key="1"/>
<proteinExistence type="predicted"/>
<gene>
    <name type="primary">relB1</name>
    <name type="ordered locus">MJ0070</name>
</gene>
<sequence>MLNINKEIAQIETELNELKKLRDEISERIEKLEIKLLKLKALAIPEEEFEEDYEEIIEDVKKSLDKKETVPAEEALKELGLL</sequence>
<keyword id="KW-1185">Reference proteome</keyword>
<keyword id="KW-1277">Toxin-antitoxin system</keyword>
<reference key="1">
    <citation type="journal article" date="1996" name="Science">
        <title>Complete genome sequence of the methanogenic archaeon, Methanococcus jannaschii.</title>
        <authorList>
            <person name="Bult C.J."/>
            <person name="White O."/>
            <person name="Olsen G.J."/>
            <person name="Zhou L."/>
            <person name="Fleischmann R.D."/>
            <person name="Sutton G.G."/>
            <person name="Blake J.A."/>
            <person name="FitzGerald L.M."/>
            <person name="Clayton R.A."/>
            <person name="Gocayne J.D."/>
            <person name="Kerlavage A.R."/>
            <person name="Dougherty B.A."/>
            <person name="Tomb J.-F."/>
            <person name="Adams M.D."/>
            <person name="Reich C.I."/>
            <person name="Overbeek R."/>
            <person name="Kirkness E.F."/>
            <person name="Weinstock K.G."/>
            <person name="Merrick J.M."/>
            <person name="Glodek A."/>
            <person name="Scott J.L."/>
            <person name="Geoghagen N.S.M."/>
            <person name="Weidman J.F."/>
            <person name="Fuhrmann J.L."/>
            <person name="Nguyen D."/>
            <person name="Utterback T.R."/>
            <person name="Kelley J.M."/>
            <person name="Peterson J.D."/>
            <person name="Sadow P.W."/>
            <person name="Hanna M.C."/>
            <person name="Cotton M.D."/>
            <person name="Roberts K.M."/>
            <person name="Hurst M.A."/>
            <person name="Kaine B.P."/>
            <person name="Borodovsky M."/>
            <person name="Klenk H.-P."/>
            <person name="Fraser C.M."/>
            <person name="Smith H.O."/>
            <person name="Woese C.R."/>
            <person name="Venter J.C."/>
        </authorList>
    </citation>
    <scope>NUCLEOTIDE SEQUENCE [LARGE SCALE GENOMIC DNA]</scope>
    <source>
        <strain>ATCC 43067 / DSM 2661 / JAL-1 / JCM 10045 / NBRC 100440</strain>
    </source>
</reference>
<reference key="2">
    <citation type="journal article" date="2005" name="Nucleic Acids Res.">
        <title>Toxin-antitoxin loci are highly abundant in free-living but lost from host-associated prokaryotes.</title>
        <authorList>
            <person name="Pandey D.P."/>
            <person name="Gerdes K."/>
        </authorList>
    </citation>
    <scope>POSSIBLE FUNCTION</scope>
    <source>
        <strain>ATCC 43067 / DSM 2661 / JAL-1 / JCM 10045 / NBRC 100440</strain>
    </source>
</reference>
<name>RELB1_METJA</name>
<dbReference type="EMBL" id="L77117">
    <property type="protein sequence ID" value="AAB98053.1"/>
    <property type="molecule type" value="Genomic_DNA"/>
</dbReference>
<dbReference type="PIR" id="F64308">
    <property type="entry name" value="F64308"/>
</dbReference>
<dbReference type="RefSeq" id="WP_010869562.1">
    <property type="nucleotide sequence ID" value="NC_000909.1"/>
</dbReference>
<dbReference type="SMR" id="Q60373"/>
<dbReference type="STRING" id="243232.MJ_0070"/>
<dbReference type="PaxDb" id="243232-MJ_0070"/>
<dbReference type="EnsemblBacteria" id="AAB98053">
    <property type="protein sequence ID" value="AAB98053"/>
    <property type="gene ID" value="MJ_0070"/>
</dbReference>
<dbReference type="GeneID" id="1450909"/>
<dbReference type="KEGG" id="mja:MJ_0070"/>
<dbReference type="eggNOG" id="arCOG09828">
    <property type="taxonomic scope" value="Archaea"/>
</dbReference>
<dbReference type="HOGENOM" id="CLU_2550326_0_0_2"/>
<dbReference type="InParanoid" id="Q60373"/>
<dbReference type="Proteomes" id="UP000000805">
    <property type="component" value="Chromosome"/>
</dbReference>
<comment type="function">
    <text evidence="1">Antitoxin component of a type II toxin-antitoxin (TA) system. Its cognate toxin is RelE1 (Potential).</text>
</comment>
<accession>Q60373</accession>
<organism>
    <name type="scientific">Methanocaldococcus jannaschii (strain ATCC 43067 / DSM 2661 / JAL-1 / JCM 10045 / NBRC 100440)</name>
    <name type="common">Methanococcus jannaschii</name>
    <dbReference type="NCBI Taxonomy" id="243232"/>
    <lineage>
        <taxon>Archaea</taxon>
        <taxon>Methanobacteriati</taxon>
        <taxon>Methanobacteriota</taxon>
        <taxon>Methanomada group</taxon>
        <taxon>Methanococci</taxon>
        <taxon>Methanococcales</taxon>
        <taxon>Methanocaldococcaceae</taxon>
        <taxon>Methanocaldococcus</taxon>
    </lineage>
</organism>
<protein>
    <recommendedName>
        <fullName>Putative antitoxin RelB1</fullName>
    </recommendedName>
</protein>